<name>IF2_STRTD</name>
<dbReference type="EMBL" id="CP000419">
    <property type="protein sequence ID" value="ABJ65684.1"/>
    <property type="molecule type" value="Genomic_DNA"/>
</dbReference>
<dbReference type="RefSeq" id="WP_011680757.1">
    <property type="nucleotide sequence ID" value="NC_008532.1"/>
</dbReference>
<dbReference type="SMR" id="Q03M88"/>
<dbReference type="KEGG" id="ste:STER_0383"/>
<dbReference type="HOGENOM" id="CLU_006301_5_0_9"/>
<dbReference type="GO" id="GO:0005829">
    <property type="term" value="C:cytosol"/>
    <property type="evidence" value="ECO:0007669"/>
    <property type="project" value="TreeGrafter"/>
</dbReference>
<dbReference type="GO" id="GO:0005525">
    <property type="term" value="F:GTP binding"/>
    <property type="evidence" value="ECO:0007669"/>
    <property type="project" value="UniProtKB-KW"/>
</dbReference>
<dbReference type="GO" id="GO:0003924">
    <property type="term" value="F:GTPase activity"/>
    <property type="evidence" value="ECO:0007669"/>
    <property type="project" value="UniProtKB-UniRule"/>
</dbReference>
<dbReference type="GO" id="GO:0003743">
    <property type="term" value="F:translation initiation factor activity"/>
    <property type="evidence" value="ECO:0007669"/>
    <property type="project" value="UniProtKB-UniRule"/>
</dbReference>
<dbReference type="CDD" id="cd01887">
    <property type="entry name" value="IF2_eIF5B"/>
    <property type="match status" value="1"/>
</dbReference>
<dbReference type="CDD" id="cd03702">
    <property type="entry name" value="IF2_mtIF2_II"/>
    <property type="match status" value="1"/>
</dbReference>
<dbReference type="CDD" id="cd03692">
    <property type="entry name" value="mtIF2_IVc"/>
    <property type="match status" value="1"/>
</dbReference>
<dbReference type="FunFam" id="2.40.30.10:FF:000007">
    <property type="entry name" value="Translation initiation factor IF-2"/>
    <property type="match status" value="1"/>
</dbReference>
<dbReference type="FunFam" id="2.40.30.10:FF:000008">
    <property type="entry name" value="Translation initiation factor IF-2"/>
    <property type="match status" value="1"/>
</dbReference>
<dbReference type="FunFam" id="3.40.50.10050:FF:000001">
    <property type="entry name" value="Translation initiation factor IF-2"/>
    <property type="match status" value="1"/>
</dbReference>
<dbReference type="FunFam" id="3.40.50.300:FF:000019">
    <property type="entry name" value="Translation initiation factor IF-2"/>
    <property type="match status" value="1"/>
</dbReference>
<dbReference type="Gene3D" id="1.10.10.2480">
    <property type="match status" value="1"/>
</dbReference>
<dbReference type="Gene3D" id="3.40.50.300">
    <property type="entry name" value="P-loop containing nucleotide triphosphate hydrolases"/>
    <property type="match status" value="1"/>
</dbReference>
<dbReference type="Gene3D" id="2.40.30.10">
    <property type="entry name" value="Translation factors"/>
    <property type="match status" value="2"/>
</dbReference>
<dbReference type="Gene3D" id="3.40.50.10050">
    <property type="entry name" value="Translation initiation factor IF- 2, domain 3"/>
    <property type="match status" value="1"/>
</dbReference>
<dbReference type="HAMAP" id="MF_00100_B">
    <property type="entry name" value="IF_2_B"/>
    <property type="match status" value="1"/>
</dbReference>
<dbReference type="InterPro" id="IPR053905">
    <property type="entry name" value="EF-G-like_DII"/>
</dbReference>
<dbReference type="InterPro" id="IPR044145">
    <property type="entry name" value="IF2_II"/>
</dbReference>
<dbReference type="InterPro" id="IPR006847">
    <property type="entry name" value="IF2_N"/>
</dbReference>
<dbReference type="InterPro" id="IPR027417">
    <property type="entry name" value="P-loop_NTPase"/>
</dbReference>
<dbReference type="InterPro" id="IPR005225">
    <property type="entry name" value="Small_GTP-bd"/>
</dbReference>
<dbReference type="InterPro" id="IPR000795">
    <property type="entry name" value="T_Tr_GTP-bd_dom"/>
</dbReference>
<dbReference type="InterPro" id="IPR000178">
    <property type="entry name" value="TF_IF2_bacterial-like"/>
</dbReference>
<dbReference type="InterPro" id="IPR015760">
    <property type="entry name" value="TIF_IF2"/>
</dbReference>
<dbReference type="InterPro" id="IPR023115">
    <property type="entry name" value="TIF_IF2_dom3"/>
</dbReference>
<dbReference type="InterPro" id="IPR036925">
    <property type="entry name" value="TIF_IF2_dom3_sf"/>
</dbReference>
<dbReference type="InterPro" id="IPR009000">
    <property type="entry name" value="Transl_B-barrel_sf"/>
</dbReference>
<dbReference type="NCBIfam" id="TIGR00487">
    <property type="entry name" value="IF-2"/>
    <property type="match status" value="1"/>
</dbReference>
<dbReference type="NCBIfam" id="TIGR00231">
    <property type="entry name" value="small_GTP"/>
    <property type="match status" value="1"/>
</dbReference>
<dbReference type="PANTHER" id="PTHR43381:SF5">
    <property type="entry name" value="TR-TYPE G DOMAIN-CONTAINING PROTEIN"/>
    <property type="match status" value="1"/>
</dbReference>
<dbReference type="PANTHER" id="PTHR43381">
    <property type="entry name" value="TRANSLATION INITIATION FACTOR IF-2-RELATED"/>
    <property type="match status" value="1"/>
</dbReference>
<dbReference type="Pfam" id="PF22042">
    <property type="entry name" value="EF-G_D2"/>
    <property type="match status" value="1"/>
</dbReference>
<dbReference type="Pfam" id="PF00009">
    <property type="entry name" value="GTP_EFTU"/>
    <property type="match status" value="1"/>
</dbReference>
<dbReference type="Pfam" id="PF11987">
    <property type="entry name" value="IF-2"/>
    <property type="match status" value="1"/>
</dbReference>
<dbReference type="Pfam" id="PF04760">
    <property type="entry name" value="IF2_N"/>
    <property type="match status" value="2"/>
</dbReference>
<dbReference type="PRINTS" id="PR00449">
    <property type="entry name" value="RASTRNSFRMNG"/>
</dbReference>
<dbReference type="SUPFAM" id="SSF52156">
    <property type="entry name" value="Initiation factor IF2/eIF5b, domain 3"/>
    <property type="match status" value="1"/>
</dbReference>
<dbReference type="SUPFAM" id="SSF52540">
    <property type="entry name" value="P-loop containing nucleoside triphosphate hydrolases"/>
    <property type="match status" value="1"/>
</dbReference>
<dbReference type="SUPFAM" id="SSF50447">
    <property type="entry name" value="Translation proteins"/>
    <property type="match status" value="2"/>
</dbReference>
<dbReference type="PROSITE" id="PS51722">
    <property type="entry name" value="G_TR_2"/>
    <property type="match status" value="1"/>
</dbReference>
<dbReference type="PROSITE" id="PS01176">
    <property type="entry name" value="IF2"/>
    <property type="match status" value="1"/>
</dbReference>
<keyword id="KW-0963">Cytoplasm</keyword>
<keyword id="KW-0342">GTP-binding</keyword>
<keyword id="KW-0396">Initiation factor</keyword>
<keyword id="KW-0547">Nucleotide-binding</keyword>
<keyword id="KW-0648">Protein biosynthesis</keyword>
<organism>
    <name type="scientific">Streptococcus thermophilus (strain ATCC BAA-491 / LMD-9)</name>
    <dbReference type="NCBI Taxonomy" id="322159"/>
    <lineage>
        <taxon>Bacteria</taxon>
        <taxon>Bacillati</taxon>
        <taxon>Bacillota</taxon>
        <taxon>Bacilli</taxon>
        <taxon>Lactobacillales</taxon>
        <taxon>Streptococcaceae</taxon>
        <taxon>Streptococcus</taxon>
    </lineage>
</organism>
<feature type="chain" id="PRO_1000008357" description="Translation initiation factor IF-2">
    <location>
        <begin position="1"/>
        <end position="943"/>
    </location>
</feature>
<feature type="domain" description="tr-type G">
    <location>
        <begin position="445"/>
        <end position="614"/>
    </location>
</feature>
<feature type="region of interest" description="Disordered" evidence="3">
    <location>
        <begin position="29"/>
        <end position="349"/>
    </location>
</feature>
<feature type="region of interest" description="G1" evidence="1">
    <location>
        <begin position="454"/>
        <end position="461"/>
    </location>
</feature>
<feature type="region of interest" description="G2" evidence="1">
    <location>
        <begin position="479"/>
        <end position="483"/>
    </location>
</feature>
<feature type="region of interest" description="G3" evidence="1">
    <location>
        <begin position="500"/>
        <end position="503"/>
    </location>
</feature>
<feature type="region of interest" description="G4" evidence="1">
    <location>
        <begin position="554"/>
        <end position="557"/>
    </location>
</feature>
<feature type="region of interest" description="G5" evidence="1">
    <location>
        <begin position="590"/>
        <end position="592"/>
    </location>
</feature>
<feature type="compositionally biased region" description="Basic and acidic residues" evidence="3">
    <location>
        <begin position="69"/>
        <end position="82"/>
    </location>
</feature>
<feature type="compositionally biased region" description="Basic and acidic residues" evidence="3">
    <location>
        <begin position="112"/>
        <end position="137"/>
    </location>
</feature>
<feature type="compositionally biased region" description="Basic and acidic residues" evidence="3">
    <location>
        <begin position="145"/>
        <end position="155"/>
    </location>
</feature>
<feature type="compositionally biased region" description="Basic and acidic residues" evidence="3">
    <location>
        <begin position="163"/>
        <end position="196"/>
    </location>
</feature>
<feature type="compositionally biased region" description="Basic and acidic residues" evidence="3">
    <location>
        <begin position="224"/>
        <end position="253"/>
    </location>
</feature>
<feature type="compositionally biased region" description="Low complexity" evidence="3">
    <location>
        <begin position="254"/>
        <end position="266"/>
    </location>
</feature>
<feature type="compositionally biased region" description="Basic and acidic residues" evidence="3">
    <location>
        <begin position="296"/>
        <end position="309"/>
    </location>
</feature>
<feature type="compositionally biased region" description="Low complexity" evidence="3">
    <location>
        <begin position="313"/>
        <end position="332"/>
    </location>
</feature>
<feature type="binding site" evidence="2">
    <location>
        <begin position="454"/>
        <end position="461"/>
    </location>
    <ligand>
        <name>GTP</name>
        <dbReference type="ChEBI" id="CHEBI:37565"/>
    </ligand>
</feature>
<feature type="binding site" evidence="2">
    <location>
        <begin position="500"/>
        <end position="504"/>
    </location>
    <ligand>
        <name>GTP</name>
        <dbReference type="ChEBI" id="CHEBI:37565"/>
    </ligand>
</feature>
<feature type="binding site" evidence="2">
    <location>
        <begin position="554"/>
        <end position="557"/>
    </location>
    <ligand>
        <name>GTP</name>
        <dbReference type="ChEBI" id="CHEBI:37565"/>
    </ligand>
</feature>
<accession>Q03M88</accession>
<gene>
    <name evidence="2" type="primary">infB</name>
    <name type="ordered locus">STER_0383</name>
</gene>
<reference key="1">
    <citation type="journal article" date="2006" name="Proc. Natl. Acad. Sci. U.S.A.">
        <title>Comparative genomics of the lactic acid bacteria.</title>
        <authorList>
            <person name="Makarova K.S."/>
            <person name="Slesarev A."/>
            <person name="Wolf Y.I."/>
            <person name="Sorokin A."/>
            <person name="Mirkin B."/>
            <person name="Koonin E.V."/>
            <person name="Pavlov A."/>
            <person name="Pavlova N."/>
            <person name="Karamychev V."/>
            <person name="Polouchine N."/>
            <person name="Shakhova V."/>
            <person name="Grigoriev I."/>
            <person name="Lou Y."/>
            <person name="Rohksar D."/>
            <person name="Lucas S."/>
            <person name="Huang K."/>
            <person name="Goodstein D.M."/>
            <person name="Hawkins T."/>
            <person name="Plengvidhya V."/>
            <person name="Welker D."/>
            <person name="Hughes J."/>
            <person name="Goh Y."/>
            <person name="Benson A."/>
            <person name="Baldwin K."/>
            <person name="Lee J.-H."/>
            <person name="Diaz-Muniz I."/>
            <person name="Dosti B."/>
            <person name="Smeianov V."/>
            <person name="Wechter W."/>
            <person name="Barabote R."/>
            <person name="Lorca G."/>
            <person name="Altermann E."/>
            <person name="Barrangou R."/>
            <person name="Ganesan B."/>
            <person name="Xie Y."/>
            <person name="Rawsthorne H."/>
            <person name="Tamir D."/>
            <person name="Parker C."/>
            <person name="Breidt F."/>
            <person name="Broadbent J.R."/>
            <person name="Hutkins R."/>
            <person name="O'Sullivan D."/>
            <person name="Steele J."/>
            <person name="Unlu G."/>
            <person name="Saier M.H. Jr."/>
            <person name="Klaenhammer T."/>
            <person name="Richardson P."/>
            <person name="Kozyavkin S."/>
            <person name="Weimer B.C."/>
            <person name="Mills D.A."/>
        </authorList>
    </citation>
    <scope>NUCLEOTIDE SEQUENCE [LARGE SCALE GENOMIC DNA]</scope>
    <source>
        <strain>ATCC BAA-491 / LMD-9</strain>
    </source>
</reference>
<protein>
    <recommendedName>
        <fullName evidence="2">Translation initiation factor IF-2</fullName>
    </recommendedName>
</protein>
<proteinExistence type="inferred from homology"/>
<evidence type="ECO:0000250" key="1"/>
<evidence type="ECO:0000255" key="2">
    <source>
        <dbReference type="HAMAP-Rule" id="MF_00100"/>
    </source>
</evidence>
<evidence type="ECO:0000256" key="3">
    <source>
        <dbReference type="SAM" id="MobiDB-lite"/>
    </source>
</evidence>
<comment type="function">
    <text evidence="2">One of the essential components for the initiation of protein synthesis. Protects formylmethionyl-tRNA from spontaneous hydrolysis and promotes its binding to the 30S ribosomal subunits. Also involved in the hydrolysis of GTP during the formation of the 70S ribosomal complex.</text>
</comment>
<comment type="subcellular location">
    <subcellularLocation>
        <location evidence="2">Cytoplasm</location>
    </subcellularLocation>
</comment>
<comment type="similarity">
    <text evidence="2">Belongs to the TRAFAC class translation factor GTPase superfamily. Classic translation factor GTPase family. IF-2 subfamily.</text>
</comment>
<sequence>MSKKRLYEIAKEVGVESKVIVAKAQELGLSVKSHSSSVEEADANRITSSLKAGTAKDESKPAPKATPTPKEEKVEPKVDKASVAKSAPAKETSKAEVKEASVALKKPKSRNFKAEREARAKAEAERRKNGGGRDNRNRNQQGNDQGKRHNNDRRNQKGNGQGDHNKGNRDNSTNHDRNFQGKLRNDQNQNNRRDNARNNQAGPRIDLKARAAALKAEQNAEYSRQSETRFREEKAAEQRRAKEQEKARKEKQQAEVAVQKAAAETKPAPKPAPVAPQSAPTAQVQDTRRKKVRPNKSRDNHRVNEDGPKQTRNNKWNNQNQVRNQRNSNWNKNKNKKGKNNRGNSAPKLVTERKFHELPKEFEYTEGMTVAEIAKRIKREPAEIVKKLFMMGVMATQNQSLDGDTIELLMVDYGIEATKKEEVDNADIERFFVDEDYLNKDAMVERAPVVTIMGHVDHGKTTLLDTLRNSRVATGEAGGITQHIGAYQIEEGGKKITFLDTPGHAAFTSMRARGASVTDITVLIVAADDGVMPQTIEAINHSKAAGVPIIVAINKIDKPDANPERVIGELAEHGVISTAWGGDSEFVEISAKFGQNIEELLETILLVAEVEELKADPTVRAIGTVIEARLDKGKGAVATLLVQQGTLNVQDPIVVGNTFGRVRAMTNDLGRRIKTAGPSAPVSITGLNEAPMAGDHFAVYEDEKAARAAGEERAKRALMKQRQQTHRVSLDNLFDTLKAGEMKTVNVIIKADVQGSVEALAASLLKIDVEGVRVNVVHSAVGAINESDITLAEASDAVVIGFNVRPTPQARQQAETDEVEIRLHSIIYKVIEEIEDAMKGMLDPEFEEKIIGEAVIRETFKVSKVGTIGGFMVTNGKITRDSSARVIRDGVVIFDGKLASLKHYKDDVKEVGNAQEGGLTIENYNDIKVDDVIEAYIMEEIKR</sequence>